<proteinExistence type="evidence at transcript level"/>
<reference key="1">
    <citation type="journal article" date="1998" name="Anim. Genet.">
        <title>Mapping of porcine genes belonging to two different cytochrome P450 subfamilies.</title>
        <authorList>
            <person name="Nissen P.H."/>
            <person name="Winteroe A.K."/>
            <person name="Fredholm M."/>
        </authorList>
    </citation>
    <scope>NUCLEOTIDE SEQUENCE [MRNA]</scope>
    <source>
        <tissue>Small intestine</tissue>
    </source>
</reference>
<sequence>CDPTFILDCAPCNVICSIIFQNRFDYTDQDFLTLLEKFHENLNILSSPWIQVCNNFPALIDYSPGIHNKLLKNIAYLKSYVLKKVKEHQESLDINNPRDFIDCFLIKMEQEKHNQQSEYTIENLIATVSDMFSAGTETTSTTMRYGLLLLLKHPEVTAKVQEEIDRVIGRHRSACMQDRSHMPYTDAVVHEIQRYIDLVPTNLPHAVTCDIKFRNYLIPKGTTILTSLTSVLYDCKAFPNPEVFDPGHFLDESGNFKKSDYFMPFSTGKRICVGEGLARMELFLFLTTILQKFNLKSVVDPKDIDTTPVANGFASVPPFYQICFIPL</sequence>
<organism>
    <name type="scientific">Sus scrofa</name>
    <name type="common">Pig</name>
    <dbReference type="NCBI Taxonomy" id="9823"/>
    <lineage>
        <taxon>Eukaryota</taxon>
        <taxon>Metazoa</taxon>
        <taxon>Chordata</taxon>
        <taxon>Craniata</taxon>
        <taxon>Vertebrata</taxon>
        <taxon>Euteleostomi</taxon>
        <taxon>Mammalia</taxon>
        <taxon>Eutheria</taxon>
        <taxon>Laurasiatheria</taxon>
        <taxon>Artiodactyla</taxon>
        <taxon>Suina</taxon>
        <taxon>Suidae</taxon>
        <taxon>Sus</taxon>
    </lineage>
</organism>
<accession>P79402</accession>
<keyword id="KW-0256">Endoplasmic reticulum</keyword>
<keyword id="KW-0349">Heme</keyword>
<keyword id="KW-0408">Iron</keyword>
<keyword id="KW-0472">Membrane</keyword>
<keyword id="KW-0479">Metal-binding</keyword>
<keyword id="KW-0492">Microsome</keyword>
<keyword id="KW-0503">Monooxygenase</keyword>
<keyword id="KW-0560">Oxidoreductase</keyword>
<keyword id="KW-1185">Reference proteome</keyword>
<dbReference type="EC" id="1.14.14.1"/>
<dbReference type="EMBL" id="Z93098">
    <property type="protein sequence ID" value="CAB07512.1"/>
    <property type="molecule type" value="mRNA"/>
</dbReference>
<dbReference type="SMR" id="P79402"/>
<dbReference type="STRING" id="9823.ENSSSCP00000057853"/>
<dbReference type="PaxDb" id="9823-ENSSSCP00000021926"/>
<dbReference type="PeptideAtlas" id="P79402"/>
<dbReference type="eggNOG" id="KOG0156">
    <property type="taxonomic scope" value="Eukaryota"/>
</dbReference>
<dbReference type="HOGENOM" id="CLU_001570_22_3_1"/>
<dbReference type="InParanoid" id="P79402"/>
<dbReference type="Proteomes" id="UP000008227">
    <property type="component" value="Unplaced"/>
</dbReference>
<dbReference type="Proteomes" id="UP000314985">
    <property type="component" value="Unplaced"/>
</dbReference>
<dbReference type="Proteomes" id="UP000694570">
    <property type="component" value="Unplaced"/>
</dbReference>
<dbReference type="Proteomes" id="UP000694571">
    <property type="component" value="Unplaced"/>
</dbReference>
<dbReference type="Proteomes" id="UP000694720">
    <property type="component" value="Unplaced"/>
</dbReference>
<dbReference type="Proteomes" id="UP000694722">
    <property type="component" value="Unplaced"/>
</dbReference>
<dbReference type="Proteomes" id="UP000694723">
    <property type="component" value="Unplaced"/>
</dbReference>
<dbReference type="Proteomes" id="UP000694724">
    <property type="component" value="Unplaced"/>
</dbReference>
<dbReference type="Proteomes" id="UP000694725">
    <property type="component" value="Unplaced"/>
</dbReference>
<dbReference type="Proteomes" id="UP000694726">
    <property type="component" value="Unplaced"/>
</dbReference>
<dbReference type="Proteomes" id="UP000694727">
    <property type="component" value="Unplaced"/>
</dbReference>
<dbReference type="Proteomes" id="UP000694728">
    <property type="component" value="Unplaced"/>
</dbReference>
<dbReference type="GO" id="GO:0005737">
    <property type="term" value="C:cytoplasm"/>
    <property type="evidence" value="ECO:0000318"/>
    <property type="project" value="GO_Central"/>
</dbReference>
<dbReference type="GO" id="GO:0005789">
    <property type="term" value="C:endoplasmic reticulum membrane"/>
    <property type="evidence" value="ECO:0007669"/>
    <property type="project" value="UniProtKB-SubCell"/>
</dbReference>
<dbReference type="GO" id="GO:0043231">
    <property type="term" value="C:intracellular membrane-bounded organelle"/>
    <property type="evidence" value="ECO:0000318"/>
    <property type="project" value="GO_Central"/>
</dbReference>
<dbReference type="GO" id="GO:0020037">
    <property type="term" value="F:heme binding"/>
    <property type="evidence" value="ECO:0000318"/>
    <property type="project" value="GO_Central"/>
</dbReference>
<dbReference type="GO" id="GO:0005506">
    <property type="term" value="F:iron ion binding"/>
    <property type="evidence" value="ECO:0007669"/>
    <property type="project" value="InterPro"/>
</dbReference>
<dbReference type="GO" id="GO:0016712">
    <property type="term" value="F:oxidoreductase activity, acting on paired donors, with incorporation or reduction of molecular oxygen, reduced flavin or flavoprotein as one donor, and incorporation of one atom of oxygen"/>
    <property type="evidence" value="ECO:0000318"/>
    <property type="project" value="GO_Central"/>
</dbReference>
<dbReference type="GO" id="GO:0006082">
    <property type="term" value="P:organic acid metabolic process"/>
    <property type="evidence" value="ECO:0000318"/>
    <property type="project" value="GO_Central"/>
</dbReference>
<dbReference type="GO" id="GO:0006805">
    <property type="term" value="P:xenobiotic metabolic process"/>
    <property type="evidence" value="ECO:0000318"/>
    <property type="project" value="GO_Central"/>
</dbReference>
<dbReference type="FunFam" id="1.10.630.10:FF:000299">
    <property type="entry name" value="Cytochrome P450 2C9"/>
    <property type="match status" value="1"/>
</dbReference>
<dbReference type="Gene3D" id="1.10.630.10">
    <property type="entry name" value="Cytochrome P450"/>
    <property type="match status" value="1"/>
</dbReference>
<dbReference type="InterPro" id="IPR001128">
    <property type="entry name" value="Cyt_P450"/>
</dbReference>
<dbReference type="InterPro" id="IPR017972">
    <property type="entry name" value="Cyt_P450_CS"/>
</dbReference>
<dbReference type="InterPro" id="IPR002401">
    <property type="entry name" value="Cyt_P450_E_grp-I"/>
</dbReference>
<dbReference type="InterPro" id="IPR036396">
    <property type="entry name" value="Cyt_P450_sf"/>
</dbReference>
<dbReference type="InterPro" id="IPR050182">
    <property type="entry name" value="Cytochrome_P450_fam2"/>
</dbReference>
<dbReference type="PANTHER" id="PTHR24300:SF423">
    <property type="entry name" value="CYTOCHROME P450 2C18"/>
    <property type="match status" value="1"/>
</dbReference>
<dbReference type="PANTHER" id="PTHR24300">
    <property type="entry name" value="CYTOCHROME P450 508A4-RELATED"/>
    <property type="match status" value="1"/>
</dbReference>
<dbReference type="Pfam" id="PF00067">
    <property type="entry name" value="p450"/>
    <property type="match status" value="1"/>
</dbReference>
<dbReference type="PRINTS" id="PR00463">
    <property type="entry name" value="EP450I"/>
</dbReference>
<dbReference type="PRINTS" id="PR00385">
    <property type="entry name" value="P450"/>
</dbReference>
<dbReference type="SUPFAM" id="SSF48264">
    <property type="entry name" value="Cytochrome P450"/>
    <property type="match status" value="1"/>
</dbReference>
<dbReference type="PROSITE" id="PS00086">
    <property type="entry name" value="CYTOCHROME_P450"/>
    <property type="match status" value="1"/>
</dbReference>
<gene>
    <name type="primary">CYP2C42</name>
</gene>
<evidence type="ECO:0000250" key="1"/>
<evidence type="ECO:0000305" key="2"/>
<name>CP242_PIG</name>
<feature type="chain" id="PRO_0000051725" description="Cytochrome P450 2C42">
    <location>
        <begin position="1" status="less than"/>
        <end position="327"/>
    </location>
</feature>
<feature type="binding site" description="axial binding residue" evidence="1">
    <location>
        <position position="272"/>
    </location>
    <ligand>
        <name>heme</name>
        <dbReference type="ChEBI" id="CHEBI:30413"/>
    </ligand>
    <ligandPart>
        <name>Fe</name>
        <dbReference type="ChEBI" id="CHEBI:18248"/>
    </ligandPart>
</feature>
<feature type="non-terminal residue">
    <location>
        <position position="1"/>
    </location>
</feature>
<comment type="function">
    <text>Cytochromes P450 are a group of heme-thiolate monooxygenases. In liver microsomes, this enzyme is involved in an NADPH-dependent electron transport pathway. It oxidizes a variety of structurally unrelated compounds, including steroids, fatty acids, and xenobiotics.</text>
</comment>
<comment type="catalytic activity">
    <reaction>
        <text>an organic molecule + reduced [NADPH--hemoprotein reductase] + O2 = an alcohol + oxidized [NADPH--hemoprotein reductase] + H2O + H(+)</text>
        <dbReference type="Rhea" id="RHEA:17149"/>
        <dbReference type="Rhea" id="RHEA-COMP:11964"/>
        <dbReference type="Rhea" id="RHEA-COMP:11965"/>
        <dbReference type="ChEBI" id="CHEBI:15377"/>
        <dbReference type="ChEBI" id="CHEBI:15378"/>
        <dbReference type="ChEBI" id="CHEBI:15379"/>
        <dbReference type="ChEBI" id="CHEBI:30879"/>
        <dbReference type="ChEBI" id="CHEBI:57618"/>
        <dbReference type="ChEBI" id="CHEBI:58210"/>
        <dbReference type="ChEBI" id="CHEBI:142491"/>
        <dbReference type="EC" id="1.14.14.1"/>
    </reaction>
</comment>
<comment type="cofactor">
    <cofactor evidence="1">
        <name>heme</name>
        <dbReference type="ChEBI" id="CHEBI:30413"/>
    </cofactor>
</comment>
<comment type="subcellular location">
    <subcellularLocation>
        <location>Endoplasmic reticulum membrane</location>
        <topology>Peripheral membrane protein</topology>
    </subcellularLocation>
    <subcellularLocation>
        <location>Microsome membrane</location>
        <topology>Peripheral membrane protein</topology>
    </subcellularLocation>
</comment>
<comment type="induction">
    <text>P450 can be induced to high levels in liver and other tissues by various foreign compounds, including drugs, pesticides, and carcinogens.</text>
</comment>
<comment type="similarity">
    <text evidence="2">Belongs to the cytochrome P450 family.</text>
</comment>
<protein>
    <recommendedName>
        <fullName>Cytochrome P450 2C42</fullName>
        <ecNumber>1.14.14.1</ecNumber>
    </recommendedName>
    <alternativeName>
        <fullName>CYPIIC42</fullName>
    </alternativeName>
</protein>